<organism>
    <name type="scientific">Sulfurimonas denitrificans (strain ATCC 33889 / DSM 1251)</name>
    <name type="common">Thiomicrospira denitrificans (strain ATCC 33889 / DSM 1251)</name>
    <dbReference type="NCBI Taxonomy" id="326298"/>
    <lineage>
        <taxon>Bacteria</taxon>
        <taxon>Pseudomonadati</taxon>
        <taxon>Campylobacterota</taxon>
        <taxon>Epsilonproteobacteria</taxon>
        <taxon>Campylobacterales</taxon>
        <taxon>Sulfurimonadaceae</taxon>
        <taxon>Sulfurimonas</taxon>
    </lineage>
</organism>
<dbReference type="EMBL" id="CP000153">
    <property type="protein sequence ID" value="ABB43573.1"/>
    <property type="molecule type" value="Genomic_DNA"/>
</dbReference>
<dbReference type="RefSeq" id="WP_011371928.1">
    <property type="nucleotide sequence ID" value="NC_007575.1"/>
</dbReference>
<dbReference type="SMR" id="Q30TV8"/>
<dbReference type="STRING" id="326298.Suden_0292"/>
<dbReference type="KEGG" id="tdn:Suden_0292"/>
<dbReference type="eggNOG" id="COG0092">
    <property type="taxonomic scope" value="Bacteria"/>
</dbReference>
<dbReference type="HOGENOM" id="CLU_058591_0_2_7"/>
<dbReference type="OrthoDB" id="9806396at2"/>
<dbReference type="Proteomes" id="UP000002714">
    <property type="component" value="Chromosome"/>
</dbReference>
<dbReference type="GO" id="GO:0022627">
    <property type="term" value="C:cytosolic small ribosomal subunit"/>
    <property type="evidence" value="ECO:0007669"/>
    <property type="project" value="TreeGrafter"/>
</dbReference>
<dbReference type="GO" id="GO:0003729">
    <property type="term" value="F:mRNA binding"/>
    <property type="evidence" value="ECO:0007669"/>
    <property type="project" value="UniProtKB-UniRule"/>
</dbReference>
<dbReference type="GO" id="GO:0019843">
    <property type="term" value="F:rRNA binding"/>
    <property type="evidence" value="ECO:0007669"/>
    <property type="project" value="UniProtKB-UniRule"/>
</dbReference>
<dbReference type="GO" id="GO:0003735">
    <property type="term" value="F:structural constituent of ribosome"/>
    <property type="evidence" value="ECO:0007669"/>
    <property type="project" value="InterPro"/>
</dbReference>
<dbReference type="GO" id="GO:0006412">
    <property type="term" value="P:translation"/>
    <property type="evidence" value="ECO:0007669"/>
    <property type="project" value="UniProtKB-UniRule"/>
</dbReference>
<dbReference type="CDD" id="cd02412">
    <property type="entry name" value="KH-II_30S_S3"/>
    <property type="match status" value="1"/>
</dbReference>
<dbReference type="FunFam" id="3.30.1140.32:FF:000006">
    <property type="entry name" value="30S ribosomal protein S3"/>
    <property type="match status" value="1"/>
</dbReference>
<dbReference type="FunFam" id="3.30.300.20:FF:000001">
    <property type="entry name" value="30S ribosomal protein S3"/>
    <property type="match status" value="1"/>
</dbReference>
<dbReference type="Gene3D" id="3.30.300.20">
    <property type="match status" value="1"/>
</dbReference>
<dbReference type="Gene3D" id="3.30.1140.32">
    <property type="entry name" value="Ribosomal protein S3, C-terminal domain"/>
    <property type="match status" value="1"/>
</dbReference>
<dbReference type="HAMAP" id="MF_01309_B">
    <property type="entry name" value="Ribosomal_uS3_B"/>
    <property type="match status" value="1"/>
</dbReference>
<dbReference type="InterPro" id="IPR004087">
    <property type="entry name" value="KH_dom"/>
</dbReference>
<dbReference type="InterPro" id="IPR015946">
    <property type="entry name" value="KH_dom-like_a/b"/>
</dbReference>
<dbReference type="InterPro" id="IPR004044">
    <property type="entry name" value="KH_dom_type_2"/>
</dbReference>
<dbReference type="InterPro" id="IPR009019">
    <property type="entry name" value="KH_sf_prok-type"/>
</dbReference>
<dbReference type="InterPro" id="IPR036419">
    <property type="entry name" value="Ribosomal_S3_C_sf"/>
</dbReference>
<dbReference type="InterPro" id="IPR005704">
    <property type="entry name" value="Ribosomal_uS3_bac-typ"/>
</dbReference>
<dbReference type="InterPro" id="IPR001351">
    <property type="entry name" value="Ribosomal_uS3_C"/>
</dbReference>
<dbReference type="InterPro" id="IPR018280">
    <property type="entry name" value="Ribosomal_uS3_CS"/>
</dbReference>
<dbReference type="NCBIfam" id="TIGR01009">
    <property type="entry name" value="rpsC_bact"/>
    <property type="match status" value="1"/>
</dbReference>
<dbReference type="PANTHER" id="PTHR11760">
    <property type="entry name" value="30S/40S RIBOSOMAL PROTEIN S3"/>
    <property type="match status" value="1"/>
</dbReference>
<dbReference type="PANTHER" id="PTHR11760:SF19">
    <property type="entry name" value="SMALL RIBOSOMAL SUBUNIT PROTEIN US3C"/>
    <property type="match status" value="1"/>
</dbReference>
<dbReference type="Pfam" id="PF07650">
    <property type="entry name" value="KH_2"/>
    <property type="match status" value="1"/>
</dbReference>
<dbReference type="Pfam" id="PF00189">
    <property type="entry name" value="Ribosomal_S3_C"/>
    <property type="match status" value="1"/>
</dbReference>
<dbReference type="SMART" id="SM00322">
    <property type="entry name" value="KH"/>
    <property type="match status" value="1"/>
</dbReference>
<dbReference type="SUPFAM" id="SSF54814">
    <property type="entry name" value="Prokaryotic type KH domain (KH-domain type II)"/>
    <property type="match status" value="1"/>
</dbReference>
<dbReference type="SUPFAM" id="SSF54821">
    <property type="entry name" value="Ribosomal protein S3 C-terminal domain"/>
    <property type="match status" value="1"/>
</dbReference>
<dbReference type="PROSITE" id="PS50823">
    <property type="entry name" value="KH_TYPE_2"/>
    <property type="match status" value="1"/>
</dbReference>
<dbReference type="PROSITE" id="PS00548">
    <property type="entry name" value="RIBOSOMAL_S3"/>
    <property type="match status" value="1"/>
</dbReference>
<name>RS3_SULDN</name>
<proteinExistence type="inferred from homology"/>
<feature type="chain" id="PRO_0000230739" description="Small ribosomal subunit protein uS3">
    <location>
        <begin position="1"/>
        <end position="241"/>
    </location>
</feature>
<feature type="domain" description="KH type-2" evidence="1">
    <location>
        <begin position="39"/>
        <end position="107"/>
    </location>
</feature>
<feature type="region of interest" description="Disordered" evidence="2">
    <location>
        <begin position="214"/>
        <end position="241"/>
    </location>
</feature>
<feature type="compositionally biased region" description="Basic and acidic residues" evidence="2">
    <location>
        <begin position="215"/>
        <end position="226"/>
    </location>
</feature>
<accession>Q30TV8</accession>
<comment type="function">
    <text evidence="1">Binds the lower part of the 30S subunit head. Binds mRNA in the 70S ribosome, positioning it for translation.</text>
</comment>
<comment type="subunit">
    <text evidence="1">Part of the 30S ribosomal subunit. Forms a tight complex with proteins S10 and S14.</text>
</comment>
<comment type="similarity">
    <text evidence="1">Belongs to the universal ribosomal protein uS3 family.</text>
</comment>
<protein>
    <recommendedName>
        <fullName evidence="1">Small ribosomal subunit protein uS3</fullName>
    </recommendedName>
    <alternativeName>
        <fullName evidence="3">30S ribosomal protein S3</fullName>
    </alternativeName>
</protein>
<gene>
    <name evidence="1" type="primary">rpsC</name>
    <name type="ordered locus">Suden_0292</name>
</gene>
<reference key="1">
    <citation type="journal article" date="2008" name="Appl. Environ. Microbiol.">
        <title>Genome of the epsilonproteobacterial chemolithoautotroph Sulfurimonas denitrificans.</title>
        <authorList>
            <person name="Sievert S.M."/>
            <person name="Scott K.M."/>
            <person name="Klotz M.G."/>
            <person name="Chain P.S.G."/>
            <person name="Hauser L.J."/>
            <person name="Hemp J."/>
            <person name="Huegler M."/>
            <person name="Land M."/>
            <person name="Lapidus A."/>
            <person name="Larimer F.W."/>
            <person name="Lucas S."/>
            <person name="Malfatti S.A."/>
            <person name="Meyer F."/>
            <person name="Paulsen I.T."/>
            <person name="Ren Q."/>
            <person name="Simon J."/>
            <person name="Bailey K."/>
            <person name="Diaz E."/>
            <person name="Fitzpatrick K.A."/>
            <person name="Glover B."/>
            <person name="Gwatney N."/>
            <person name="Korajkic A."/>
            <person name="Long A."/>
            <person name="Mobberley J.M."/>
            <person name="Pantry S.N."/>
            <person name="Pazder G."/>
            <person name="Peterson S."/>
            <person name="Quintanilla J.D."/>
            <person name="Sprinkle R."/>
            <person name="Stephens J."/>
            <person name="Thomas P."/>
            <person name="Vaughn R."/>
            <person name="Weber M.J."/>
            <person name="Wooten L.L."/>
        </authorList>
    </citation>
    <scope>NUCLEOTIDE SEQUENCE [LARGE SCALE GENOMIC DNA]</scope>
    <source>
        <strain>ATCC 33889 / DSM 1251</strain>
    </source>
</reference>
<evidence type="ECO:0000255" key="1">
    <source>
        <dbReference type="HAMAP-Rule" id="MF_01309"/>
    </source>
</evidence>
<evidence type="ECO:0000256" key="2">
    <source>
        <dbReference type="SAM" id="MobiDB-lite"/>
    </source>
</evidence>
<evidence type="ECO:0000305" key="3"/>
<keyword id="KW-1185">Reference proteome</keyword>
<keyword id="KW-0687">Ribonucleoprotein</keyword>
<keyword id="KW-0689">Ribosomal protein</keyword>
<keyword id="KW-0694">RNA-binding</keyword>
<keyword id="KW-0699">rRNA-binding</keyword>
<sequence length="241" mass="26980">MGQKVNPIGLRLGINRNWESRWFPNFKTAAAYLGEDHKIRTYLKKELYYAGVSNIVIERTAKRLRVTIIAARPGIIIGKKGSDIEKLKDTLQALVGKPLSVNIKEEKKAQISSQLVAENVATQLERRVAFRRAMKKVMQNAQRGGAKGIKVSVSGRLGGAEMARTEWYLEGRVPLHTLRAKIDYGFAEAHTTYGCIGVKVWIFKGEVLTKGIPAEVKEEQQKEGARRPKRAPKRENSGKAE</sequence>